<dbReference type="EMBL" id="AB169158">
    <property type="protein sequence ID" value="BAE01251.1"/>
    <property type="molecule type" value="mRNA"/>
</dbReference>
<dbReference type="RefSeq" id="NP_001306562.1">
    <property type="nucleotide sequence ID" value="NM_001319633.1"/>
</dbReference>
<dbReference type="RefSeq" id="XP_015306372.1">
    <property type="nucleotide sequence ID" value="XM_015450886.1"/>
</dbReference>
<dbReference type="RefSeq" id="XP_045248866.1">
    <property type="nucleotide sequence ID" value="XM_045392931.2"/>
</dbReference>
<dbReference type="SMR" id="Q4R6M4"/>
<dbReference type="STRING" id="9541.ENSMFAP00000040436"/>
<dbReference type="GeneID" id="101864966"/>
<dbReference type="eggNOG" id="ENOG502QQ2U">
    <property type="taxonomic scope" value="Eukaryota"/>
</dbReference>
<dbReference type="Proteomes" id="UP000233100">
    <property type="component" value="Unplaced"/>
</dbReference>
<dbReference type="GO" id="GO:0005737">
    <property type="term" value="C:cytoplasm"/>
    <property type="evidence" value="ECO:0007669"/>
    <property type="project" value="UniProtKB-KW"/>
</dbReference>
<dbReference type="GO" id="GO:0005856">
    <property type="term" value="C:cytoskeleton"/>
    <property type="evidence" value="ECO:0007669"/>
    <property type="project" value="UniProtKB-KW"/>
</dbReference>
<dbReference type="GO" id="GO:0036126">
    <property type="term" value="C:sperm flagellum"/>
    <property type="evidence" value="ECO:0000250"/>
    <property type="project" value="UniProtKB"/>
</dbReference>
<dbReference type="GO" id="GO:0003341">
    <property type="term" value="P:cilium movement"/>
    <property type="evidence" value="ECO:0000250"/>
    <property type="project" value="UniProtKB"/>
</dbReference>
<dbReference type="Gene3D" id="1.25.40.10">
    <property type="entry name" value="Tetratricopeptide repeat domain"/>
    <property type="match status" value="2"/>
</dbReference>
<dbReference type="InterPro" id="IPR051476">
    <property type="entry name" value="Bac_ResReg_Asp_Phosphatase"/>
</dbReference>
<dbReference type="InterPro" id="IPR011990">
    <property type="entry name" value="TPR-like_helical_dom_sf"/>
</dbReference>
<dbReference type="InterPro" id="IPR019734">
    <property type="entry name" value="TPR_rpt"/>
</dbReference>
<dbReference type="PANTHER" id="PTHR46630">
    <property type="entry name" value="TETRATRICOPEPTIDE REPEAT PROTEIN 29"/>
    <property type="match status" value="1"/>
</dbReference>
<dbReference type="PANTHER" id="PTHR46630:SF1">
    <property type="entry name" value="TETRATRICOPEPTIDE REPEAT PROTEIN 29"/>
    <property type="match status" value="1"/>
</dbReference>
<dbReference type="Pfam" id="PF13424">
    <property type="entry name" value="TPR_12"/>
    <property type="match status" value="1"/>
</dbReference>
<dbReference type="SMART" id="SM00028">
    <property type="entry name" value="TPR"/>
    <property type="match status" value="4"/>
</dbReference>
<dbReference type="SUPFAM" id="SSF48452">
    <property type="entry name" value="TPR-like"/>
    <property type="match status" value="1"/>
</dbReference>
<dbReference type="PROSITE" id="PS50005">
    <property type="entry name" value="TPR"/>
    <property type="match status" value="5"/>
</dbReference>
<dbReference type="PROSITE" id="PS50293">
    <property type="entry name" value="TPR_REGION"/>
    <property type="match status" value="2"/>
</dbReference>
<sequence>MTTLPPLPMTRPKLTALARQKLPCSSRKIPRSQLIKEKDDIDHYLEVNFKGLSKEEVAAYRNSYKKNICVDMLRDGYHKSFTELFALMEQWDALREAARVRSLFWLQKPLEEQPDKLDYFYHYLTRAEDAERKKSFEDVYNNLYALACYFNNPEDKWVRNHFYERCFKIAQLIKIDGGKKEAEAHMHMGLLYEEDGQLLEAAEHYEAFHQLTQGRIWKDETGRSLNLLACESLLRTYRLLSDKMLQNKEYKQAIKILIKASEIAKEGSDKKMEGEASYYLGLAHLAAEEYETALTVLDTYCKISTELDDDLSLGRAYEAIAKVLQSQGNTTEAIKYLKKFVKIARNNFQSLDFVRASTMLGDIYNEKGHYNKASQRFQQAFDTTVELMSMPLMDETKVHYGIAKAHQMMLTVNNYIESADLTSLNYLLSWKESRGDIEPDPVTEEFRGSTVETVSQNSEHLEELSRFPGDQKNET</sequence>
<accession>Q4R6M4</accession>
<name>TTC29_MACFA</name>
<organism>
    <name type="scientific">Macaca fascicularis</name>
    <name type="common">Crab-eating macaque</name>
    <name type="synonym">Cynomolgus monkey</name>
    <dbReference type="NCBI Taxonomy" id="9541"/>
    <lineage>
        <taxon>Eukaryota</taxon>
        <taxon>Metazoa</taxon>
        <taxon>Chordata</taxon>
        <taxon>Craniata</taxon>
        <taxon>Vertebrata</taxon>
        <taxon>Euteleostomi</taxon>
        <taxon>Mammalia</taxon>
        <taxon>Eutheria</taxon>
        <taxon>Euarchontoglires</taxon>
        <taxon>Primates</taxon>
        <taxon>Haplorrhini</taxon>
        <taxon>Catarrhini</taxon>
        <taxon>Cercopithecidae</taxon>
        <taxon>Cercopithecinae</taxon>
        <taxon>Macaca</taxon>
    </lineage>
</organism>
<keyword id="KW-0966">Cell projection</keyword>
<keyword id="KW-0969">Cilium</keyword>
<keyword id="KW-0963">Cytoplasm</keyword>
<keyword id="KW-0206">Cytoskeleton</keyword>
<keyword id="KW-0282">Flagellum</keyword>
<keyword id="KW-1185">Reference proteome</keyword>
<keyword id="KW-0677">Repeat</keyword>
<keyword id="KW-0802">TPR repeat</keyword>
<gene>
    <name type="primary">TTC29</name>
    <name type="ORF">QtsA-17666</name>
</gene>
<reference key="1">
    <citation type="submission" date="2005-06" db="EMBL/GenBank/DDBJ databases">
        <title>DNA sequences of macaque genes expressed in brain or testis and its evolutionary implications.</title>
        <authorList>
            <consortium name="International consortium for macaque cDNA sequencing and analysis"/>
        </authorList>
    </citation>
    <scope>NUCLEOTIDE SEQUENCE [LARGE SCALE MRNA]</scope>
    <source>
        <tissue>Testis</tissue>
    </source>
</reference>
<comment type="function">
    <text evidence="2">Axonemal protein which is implicated in axonemal and/or peri-axonemal structure assembly and regulates flagellum assembly and beating and therefore sperm motility.</text>
</comment>
<comment type="subcellular location">
    <subcellularLocation>
        <location evidence="2">Cytoplasm</location>
        <location evidence="2">Cytoskeleton</location>
        <location evidence="2">Flagellum axoneme</location>
    </subcellularLocation>
</comment>
<comment type="domain">
    <text evidence="1">The TPR repeats are required for axonemal localization and flagellar beating.</text>
</comment>
<evidence type="ECO:0000250" key="1">
    <source>
        <dbReference type="UniProtKB" id="Q57ZB2"/>
    </source>
</evidence>
<evidence type="ECO:0000250" key="2">
    <source>
        <dbReference type="UniProtKB" id="Q8NA56"/>
    </source>
</evidence>
<evidence type="ECO:0000255" key="3"/>
<evidence type="ECO:0000256" key="4">
    <source>
        <dbReference type="SAM" id="MobiDB-lite"/>
    </source>
</evidence>
<feature type="chain" id="PRO_0000294436" description="Tetratricopeptide repeat protein 29">
    <location>
        <begin position="1"/>
        <end position="475"/>
    </location>
</feature>
<feature type="repeat" description="TPR 1" evidence="2">
    <location>
        <begin position="92"/>
        <end position="131"/>
    </location>
</feature>
<feature type="repeat" description="TPR 2" evidence="2">
    <location>
        <begin position="136"/>
        <end position="173"/>
    </location>
</feature>
<feature type="repeat" description="TPR 3" evidence="3">
    <location>
        <begin position="182"/>
        <end position="215"/>
    </location>
</feature>
<feature type="repeat" description="TPR 4" evidence="3">
    <location>
        <begin position="234"/>
        <end position="267"/>
    </location>
</feature>
<feature type="repeat" description="TPR 5" evidence="3">
    <location>
        <begin position="274"/>
        <end position="307"/>
    </location>
</feature>
<feature type="repeat" description="TPR 6" evidence="3">
    <location>
        <begin position="314"/>
        <end position="347"/>
    </location>
</feature>
<feature type="repeat" description="TPR 7" evidence="3">
    <location>
        <begin position="354"/>
        <end position="387"/>
    </location>
</feature>
<feature type="region of interest" description="Disordered" evidence="4">
    <location>
        <begin position="436"/>
        <end position="475"/>
    </location>
</feature>
<feature type="compositionally biased region" description="Basic and acidic residues" evidence="4">
    <location>
        <begin position="459"/>
        <end position="475"/>
    </location>
</feature>
<protein>
    <recommendedName>
        <fullName>Tetratricopeptide repeat protein 29</fullName>
        <shortName>TPR repeat protein 29</shortName>
    </recommendedName>
</protein>
<proteinExistence type="evidence at transcript level"/>